<feature type="chain" id="PRO_0000374467" description="tRNA-2-methylthio-N(6)-dimethylallyladenosine synthase">
    <location>
        <begin position="1"/>
        <end position="437"/>
    </location>
</feature>
<feature type="domain" description="MTTase N-terminal" evidence="1">
    <location>
        <begin position="3"/>
        <end position="120"/>
    </location>
</feature>
<feature type="domain" description="Radical SAM core" evidence="2">
    <location>
        <begin position="143"/>
        <end position="370"/>
    </location>
</feature>
<feature type="domain" description="TRAM" evidence="1">
    <location>
        <begin position="373"/>
        <end position="437"/>
    </location>
</feature>
<feature type="binding site" evidence="1">
    <location>
        <position position="12"/>
    </location>
    <ligand>
        <name>[4Fe-4S] cluster</name>
        <dbReference type="ChEBI" id="CHEBI:49883"/>
        <label>1</label>
    </ligand>
</feature>
<feature type="binding site" evidence="1">
    <location>
        <position position="49"/>
    </location>
    <ligand>
        <name>[4Fe-4S] cluster</name>
        <dbReference type="ChEBI" id="CHEBI:49883"/>
        <label>1</label>
    </ligand>
</feature>
<feature type="binding site" evidence="1">
    <location>
        <position position="83"/>
    </location>
    <ligand>
        <name>[4Fe-4S] cluster</name>
        <dbReference type="ChEBI" id="CHEBI:49883"/>
        <label>1</label>
    </ligand>
</feature>
<feature type="binding site" evidence="1">
    <location>
        <position position="157"/>
    </location>
    <ligand>
        <name>[4Fe-4S] cluster</name>
        <dbReference type="ChEBI" id="CHEBI:49883"/>
        <label>2</label>
        <note>4Fe-4S-S-AdoMet</note>
    </ligand>
</feature>
<feature type="binding site" evidence="1">
    <location>
        <position position="161"/>
    </location>
    <ligand>
        <name>[4Fe-4S] cluster</name>
        <dbReference type="ChEBI" id="CHEBI:49883"/>
        <label>2</label>
        <note>4Fe-4S-S-AdoMet</note>
    </ligand>
</feature>
<feature type="binding site" evidence="1">
    <location>
        <position position="164"/>
    </location>
    <ligand>
        <name>[4Fe-4S] cluster</name>
        <dbReference type="ChEBI" id="CHEBI:49883"/>
        <label>2</label>
        <note>4Fe-4S-S-AdoMet</note>
    </ligand>
</feature>
<sequence>MTRKLFIETHGCQMNEYDSSRMVDLLGEHQAMEITENPAEADVILLNTCSIREKAQEKVFSQLGRWRELKQDNPQLVIGVGGCVASQEGAAIRDRAPYVDVVFGPQTLHRLPEMIDAARTTRTPQVDISFPEIEKFDRLPEPRVDGPSAYVSVMEGCSKYCTFCVVPYTRGEEVSRPLADVLAEIVHLAENGVKEVTLLGQNVNGYRHDGHDFADLLHAVAAIDGIGRIRYTTSHPLEFSDAIIQAHADIPQLVKYLHLPVQAGSDRILAAMKRNHTALEYKSRIRRLKAAVPDILISSDFIVGFPGETDKDFEQTMKLIEDVGFDFSYSFVYSARPGTPAADLADDTPEEVKKQRLAILQQRINQQGFENSRRMVGTTQRILVSDYSKKDPGMLQGRTEHNRIVNFRCDNPRLIGQFVDVHIDDALPHSLRGSLLS</sequence>
<dbReference type="EC" id="2.8.4.3" evidence="1"/>
<dbReference type="EMBL" id="CP000304">
    <property type="protein sequence ID" value="ABP81384.1"/>
    <property type="status" value="ALT_INIT"/>
    <property type="molecule type" value="Genomic_DNA"/>
</dbReference>
<dbReference type="RefSeq" id="WP_013984158.1">
    <property type="nucleotide sequence ID" value="NC_009434.1"/>
</dbReference>
<dbReference type="SMR" id="A4VQY3"/>
<dbReference type="GeneID" id="66823023"/>
<dbReference type="KEGG" id="psa:PST_3761"/>
<dbReference type="eggNOG" id="COG0621">
    <property type="taxonomic scope" value="Bacteria"/>
</dbReference>
<dbReference type="HOGENOM" id="CLU_018697_2_0_6"/>
<dbReference type="Proteomes" id="UP000000233">
    <property type="component" value="Chromosome"/>
</dbReference>
<dbReference type="GO" id="GO:0005829">
    <property type="term" value="C:cytosol"/>
    <property type="evidence" value="ECO:0007669"/>
    <property type="project" value="TreeGrafter"/>
</dbReference>
<dbReference type="GO" id="GO:0051539">
    <property type="term" value="F:4 iron, 4 sulfur cluster binding"/>
    <property type="evidence" value="ECO:0007669"/>
    <property type="project" value="UniProtKB-UniRule"/>
</dbReference>
<dbReference type="GO" id="GO:0046872">
    <property type="term" value="F:metal ion binding"/>
    <property type="evidence" value="ECO:0007669"/>
    <property type="project" value="UniProtKB-KW"/>
</dbReference>
<dbReference type="GO" id="GO:0035597">
    <property type="term" value="F:N6-isopentenyladenosine methylthiotransferase activity"/>
    <property type="evidence" value="ECO:0007669"/>
    <property type="project" value="TreeGrafter"/>
</dbReference>
<dbReference type="CDD" id="cd01335">
    <property type="entry name" value="Radical_SAM"/>
    <property type="match status" value="1"/>
</dbReference>
<dbReference type="FunFam" id="3.40.50.12160:FF:000001">
    <property type="entry name" value="tRNA-2-methylthio-N(6)-dimethylallyladenosine synthase"/>
    <property type="match status" value="1"/>
</dbReference>
<dbReference type="FunFam" id="3.80.30.20:FF:000001">
    <property type="entry name" value="tRNA-2-methylthio-N(6)-dimethylallyladenosine synthase 2"/>
    <property type="match status" value="1"/>
</dbReference>
<dbReference type="Gene3D" id="3.40.50.12160">
    <property type="entry name" value="Methylthiotransferase, N-terminal domain"/>
    <property type="match status" value="1"/>
</dbReference>
<dbReference type="Gene3D" id="3.80.30.20">
    <property type="entry name" value="tm_1862 like domain"/>
    <property type="match status" value="1"/>
</dbReference>
<dbReference type="HAMAP" id="MF_01864">
    <property type="entry name" value="tRNA_metthiotr_MiaB"/>
    <property type="match status" value="1"/>
</dbReference>
<dbReference type="InterPro" id="IPR006638">
    <property type="entry name" value="Elp3/MiaA/NifB-like_rSAM"/>
</dbReference>
<dbReference type="InterPro" id="IPR005839">
    <property type="entry name" value="Methylthiotransferase"/>
</dbReference>
<dbReference type="InterPro" id="IPR020612">
    <property type="entry name" value="Methylthiotransferase_CS"/>
</dbReference>
<dbReference type="InterPro" id="IPR013848">
    <property type="entry name" value="Methylthiotransferase_N"/>
</dbReference>
<dbReference type="InterPro" id="IPR038135">
    <property type="entry name" value="Methylthiotransferase_N_sf"/>
</dbReference>
<dbReference type="InterPro" id="IPR006463">
    <property type="entry name" value="MiaB_methiolase"/>
</dbReference>
<dbReference type="InterPro" id="IPR007197">
    <property type="entry name" value="rSAM"/>
</dbReference>
<dbReference type="InterPro" id="IPR023404">
    <property type="entry name" value="rSAM_horseshoe"/>
</dbReference>
<dbReference type="InterPro" id="IPR002792">
    <property type="entry name" value="TRAM_dom"/>
</dbReference>
<dbReference type="NCBIfam" id="TIGR01574">
    <property type="entry name" value="miaB-methiolase"/>
    <property type="match status" value="1"/>
</dbReference>
<dbReference type="NCBIfam" id="TIGR00089">
    <property type="entry name" value="MiaB/RimO family radical SAM methylthiotransferase"/>
    <property type="match status" value="1"/>
</dbReference>
<dbReference type="PANTHER" id="PTHR43020">
    <property type="entry name" value="CDK5 REGULATORY SUBUNIT-ASSOCIATED PROTEIN 1"/>
    <property type="match status" value="1"/>
</dbReference>
<dbReference type="PANTHER" id="PTHR43020:SF2">
    <property type="entry name" value="MITOCHONDRIAL TRNA METHYLTHIOTRANSFERASE CDK5RAP1"/>
    <property type="match status" value="1"/>
</dbReference>
<dbReference type="Pfam" id="PF04055">
    <property type="entry name" value="Radical_SAM"/>
    <property type="match status" value="1"/>
</dbReference>
<dbReference type="Pfam" id="PF01938">
    <property type="entry name" value="TRAM"/>
    <property type="match status" value="1"/>
</dbReference>
<dbReference type="Pfam" id="PF00919">
    <property type="entry name" value="UPF0004"/>
    <property type="match status" value="1"/>
</dbReference>
<dbReference type="SFLD" id="SFLDF00273">
    <property type="entry name" value="(dimethylallyl)adenosine_tRNA"/>
    <property type="match status" value="1"/>
</dbReference>
<dbReference type="SFLD" id="SFLDG01082">
    <property type="entry name" value="B12-binding_domain_containing"/>
    <property type="match status" value="1"/>
</dbReference>
<dbReference type="SFLD" id="SFLDG01061">
    <property type="entry name" value="methylthiotransferase"/>
    <property type="match status" value="1"/>
</dbReference>
<dbReference type="SMART" id="SM00729">
    <property type="entry name" value="Elp3"/>
    <property type="match status" value="1"/>
</dbReference>
<dbReference type="SUPFAM" id="SSF102114">
    <property type="entry name" value="Radical SAM enzymes"/>
    <property type="match status" value="1"/>
</dbReference>
<dbReference type="PROSITE" id="PS51449">
    <property type="entry name" value="MTTASE_N"/>
    <property type="match status" value="1"/>
</dbReference>
<dbReference type="PROSITE" id="PS01278">
    <property type="entry name" value="MTTASE_RADICAL"/>
    <property type="match status" value="1"/>
</dbReference>
<dbReference type="PROSITE" id="PS51918">
    <property type="entry name" value="RADICAL_SAM"/>
    <property type="match status" value="1"/>
</dbReference>
<dbReference type="PROSITE" id="PS50926">
    <property type="entry name" value="TRAM"/>
    <property type="match status" value="1"/>
</dbReference>
<gene>
    <name evidence="1" type="primary">miaB</name>
    <name type="ordered locus">PST_3761</name>
</gene>
<proteinExistence type="inferred from homology"/>
<evidence type="ECO:0000255" key="1">
    <source>
        <dbReference type="HAMAP-Rule" id="MF_01864"/>
    </source>
</evidence>
<evidence type="ECO:0000255" key="2">
    <source>
        <dbReference type="PROSITE-ProRule" id="PRU01266"/>
    </source>
</evidence>
<evidence type="ECO:0000305" key="3"/>
<keyword id="KW-0004">4Fe-4S</keyword>
<keyword id="KW-0963">Cytoplasm</keyword>
<keyword id="KW-0408">Iron</keyword>
<keyword id="KW-0411">Iron-sulfur</keyword>
<keyword id="KW-0479">Metal-binding</keyword>
<keyword id="KW-1185">Reference proteome</keyword>
<keyword id="KW-0949">S-adenosyl-L-methionine</keyword>
<keyword id="KW-0808">Transferase</keyword>
<keyword id="KW-0819">tRNA processing</keyword>
<organism>
    <name type="scientific">Stutzerimonas stutzeri (strain A1501)</name>
    <name type="common">Pseudomonas stutzeri</name>
    <dbReference type="NCBI Taxonomy" id="379731"/>
    <lineage>
        <taxon>Bacteria</taxon>
        <taxon>Pseudomonadati</taxon>
        <taxon>Pseudomonadota</taxon>
        <taxon>Gammaproteobacteria</taxon>
        <taxon>Pseudomonadales</taxon>
        <taxon>Pseudomonadaceae</taxon>
        <taxon>Stutzerimonas</taxon>
    </lineage>
</organism>
<comment type="function">
    <text evidence="1">Catalyzes the methylthiolation of N6-(dimethylallyl)adenosine (i(6)A), leading to the formation of 2-methylthio-N6-(dimethylallyl)adenosine (ms(2)i(6)A) at position 37 in tRNAs that read codons beginning with uridine.</text>
</comment>
<comment type="catalytic activity">
    <reaction evidence="1">
        <text>N(6)-dimethylallyladenosine(37) in tRNA + (sulfur carrier)-SH + AH2 + 2 S-adenosyl-L-methionine = 2-methylsulfanyl-N(6)-dimethylallyladenosine(37) in tRNA + (sulfur carrier)-H + 5'-deoxyadenosine + L-methionine + A + S-adenosyl-L-homocysteine + 2 H(+)</text>
        <dbReference type="Rhea" id="RHEA:37067"/>
        <dbReference type="Rhea" id="RHEA-COMP:10375"/>
        <dbReference type="Rhea" id="RHEA-COMP:10376"/>
        <dbReference type="Rhea" id="RHEA-COMP:14737"/>
        <dbReference type="Rhea" id="RHEA-COMP:14739"/>
        <dbReference type="ChEBI" id="CHEBI:13193"/>
        <dbReference type="ChEBI" id="CHEBI:15378"/>
        <dbReference type="ChEBI" id="CHEBI:17319"/>
        <dbReference type="ChEBI" id="CHEBI:17499"/>
        <dbReference type="ChEBI" id="CHEBI:29917"/>
        <dbReference type="ChEBI" id="CHEBI:57844"/>
        <dbReference type="ChEBI" id="CHEBI:57856"/>
        <dbReference type="ChEBI" id="CHEBI:59789"/>
        <dbReference type="ChEBI" id="CHEBI:64428"/>
        <dbReference type="ChEBI" id="CHEBI:74415"/>
        <dbReference type="ChEBI" id="CHEBI:74417"/>
        <dbReference type="EC" id="2.8.4.3"/>
    </reaction>
</comment>
<comment type="cofactor">
    <cofactor evidence="1">
        <name>[4Fe-4S] cluster</name>
        <dbReference type="ChEBI" id="CHEBI:49883"/>
    </cofactor>
    <text evidence="1">Binds 2 [4Fe-4S] clusters. One cluster is coordinated with 3 cysteines and an exchangeable S-adenosyl-L-methionine.</text>
</comment>
<comment type="subunit">
    <text evidence="1">Monomer.</text>
</comment>
<comment type="subcellular location">
    <subcellularLocation>
        <location evidence="1">Cytoplasm</location>
    </subcellularLocation>
</comment>
<comment type="similarity">
    <text evidence="1">Belongs to the methylthiotransferase family. MiaB subfamily.</text>
</comment>
<comment type="sequence caution" evidence="3">
    <conflict type="erroneous initiation">
        <sequence resource="EMBL-CDS" id="ABP81384"/>
    </conflict>
</comment>
<reference key="1">
    <citation type="journal article" date="2008" name="Proc. Natl. Acad. Sci. U.S.A.">
        <title>Nitrogen fixation island and rhizosphere competence traits in the genome of root-associated Pseudomonas stutzeri A1501.</title>
        <authorList>
            <person name="Yan Y."/>
            <person name="Yang J."/>
            <person name="Dou Y."/>
            <person name="Chen M."/>
            <person name="Ping S."/>
            <person name="Peng J."/>
            <person name="Lu W."/>
            <person name="Zhang W."/>
            <person name="Yao Z."/>
            <person name="Li H."/>
            <person name="Liu W."/>
            <person name="He S."/>
            <person name="Geng L."/>
            <person name="Zhang X."/>
            <person name="Yang F."/>
            <person name="Yu H."/>
            <person name="Zhan Y."/>
            <person name="Li D."/>
            <person name="Lin Z."/>
            <person name="Wang Y."/>
            <person name="Elmerich C."/>
            <person name="Lin M."/>
            <person name="Jin Q."/>
        </authorList>
    </citation>
    <scope>NUCLEOTIDE SEQUENCE [LARGE SCALE GENOMIC DNA]</scope>
    <source>
        <strain>A1501</strain>
    </source>
</reference>
<name>MIAB_STUS1</name>
<protein>
    <recommendedName>
        <fullName evidence="1">tRNA-2-methylthio-N(6)-dimethylallyladenosine synthase</fullName>
        <ecNumber evidence="1">2.8.4.3</ecNumber>
    </recommendedName>
    <alternativeName>
        <fullName evidence="1">(Dimethylallyl)adenosine tRNA methylthiotransferase MiaB</fullName>
    </alternativeName>
    <alternativeName>
        <fullName evidence="1">tRNA-i(6)A37 methylthiotransferase</fullName>
    </alternativeName>
</protein>
<accession>A4VQY3</accession>